<evidence type="ECO:0000255" key="1">
    <source>
        <dbReference type="HAMAP-Rule" id="MF_04007"/>
    </source>
</evidence>
<organism>
    <name type="scientific">Alcelaphine herpesvirus 1 (strain C500)</name>
    <name type="common">AlHV-1</name>
    <name type="synonym">Malignant catarrhal fever virus</name>
    <dbReference type="NCBI Taxonomy" id="654901"/>
    <lineage>
        <taxon>Viruses</taxon>
        <taxon>Duplodnaviria</taxon>
        <taxon>Heunggongvirae</taxon>
        <taxon>Peploviricota</taxon>
        <taxon>Herviviricetes</taxon>
        <taxon>Herpesvirales</taxon>
        <taxon>Orthoherpesviridae</taxon>
        <taxon>Gammaherpesvirinae</taxon>
        <taxon>Macavirus</taxon>
        <taxon>Macavirus alcelaphinegamma1</taxon>
    </lineage>
</organism>
<feature type="chain" id="PRO_0000405753" description="Major DNA-binding protein">
    <location>
        <begin position="1"/>
        <end position="1127"/>
    </location>
</feature>
<feature type="region of interest" description="Required for nuclear localization" evidence="1">
    <location>
        <begin position="1098"/>
        <end position="1127"/>
    </location>
</feature>
<name>DNBI_ALHV1</name>
<proteinExistence type="inferred from homology"/>
<comment type="function">
    <text evidence="1">Plays several crucial roles in viral infection. Participates in the opening of the viral DNA origin to initiate replication by interacting with the origin-binding protein. May disrupt loops, hairpins and other secondary structures present on ssDNA to reduce and eliminate pausing of viral DNA polymerase at specific sites during elongation. Promotes viral DNA recombination by performing strand-transfer, characterized by the ability to transfer a DNA strand from a linear duplex to a complementary single-stranded DNA circle. Can also catalyze the renaturation of complementary single strands. Additionally, reorganizes the host cell nucleus, leading to the formation of prereplicative sites and replication compartments. This process is driven by the protein which can form double-helical filaments in the absence of DNA.</text>
</comment>
<comment type="subunit">
    <text evidence="1">Homooligomers. Forms double-helical filaments necessary for the formation of replication compartments within the host nucleus. Interacts with the origin-binding protein. Interacts with the helicase primase complex; this interaction stimulates primer synthesis activity of the helicase-primase complex. Interacts with the DNA polymerase. Interacts with the alkaline exonuclease; this interaction increases its nuclease processivity.</text>
</comment>
<comment type="subcellular location">
    <subcellularLocation>
        <location evidence="1">Host nucleus</location>
    </subcellularLocation>
    <text evidence="1">In the absence of DNA replication, found in the nuclear framework-associated structures (prereplicative sites). As viral DNA replication proceeds, it migrates to globular intranuclear structures (replication compartments).</text>
</comment>
<comment type="similarity">
    <text evidence="1">Belongs to the herpesviridae major DNA-binding protein family.</text>
</comment>
<keyword id="KW-0235">DNA replication</keyword>
<keyword id="KW-0238">DNA-binding</keyword>
<keyword id="KW-1048">Host nucleus</keyword>
<keyword id="KW-1185">Reference proteome</keyword>
<protein>
    <recommendedName>
        <fullName evidence="1">Major DNA-binding protein</fullName>
    </recommendedName>
</protein>
<organismHost>
    <name type="scientific">Connochaetes taurinus</name>
    <name type="common">Blue wildebeest</name>
    <dbReference type="NCBI Taxonomy" id="9927"/>
</organismHost>
<accession>O36360</accession>
<sequence length="1127" mass="126887">MALKHQLNHAVEDNLGSKAPIGPCGFIYIYPETHFNFKEISLLGDKYAEAGAFSLPLLHGVTVEEAFVPNVKAVYKKIDMTTVSVKLSTFYNRAIIFHNVEKFESIFSGPGLGSLCKEACDLFGYVPFTPLGEGSTDVSDICPPVWQEKDAIMAVVITEGFKERLHLGKLIYLKSQMHSVMINKTEVYRIPLYDEDLFTKKSSLRRLYLPAVSEYLYYTLYTSLAQSLRVHNAASLVEAIQEQFVHDKYKMAKLVSFKEYPLATVGACDTTLMVIDAVAAELGLSYSLSFFEAPQEKTKVQDYYSWDIFASCETDSDRLEALSKWNALQAIHIHAQLFSTNSIYYVNRVARQAPIPNSKVEPNVYNSYYLQHGLANLCEETLFEDGSPAFTGAPASSLDGSSFTLQHLAYAAAFSPNLLARMCYYLQFCQHQKSTLNPAYNITEYVGSAANSPVCSLCSGQCPCVCINTLFYRLKDRFPPVLQGSRRDPYVITGITNVFNELDFLGNFASFRDKDEDQNQTEETPRYTYWQLNQTLTEKLEAAGLVDSPVADEGAGGSGSMNLEKFVRTFSDIDSLVDAEAAKFINTMIKNNVNFKESIKGVSHVIQYNCNTYWQAPCSLMLNLYYRSILTIIQDIALPISTVYESENPAQGYKPNEWLKLHYQTLWTNFKSFFIDKGVITGTEMKVVHAEQFSDFFDVDAATNNMYSPVKVQVRLARAQVLALKNIKVKNRILFSGTSMSEHYQNAFLKTANRRDNYILAGPYVKFLNSFHRQLFPNLKISCLYLWSNFCKKKQIPCVPGVSAEALNKFFSYINNNSKQFEEVNMLDVVPDSYVTYAKQRLNNAILRACGQTQFYAVTIHSIFPKVQETCALEYPHVLGTSSVDSVEDYVNNVQNLKALTVNSSLRESAANLARSRPIVTLPVVVNKYTGIAGNAQLFQSANLGYFMGRGVDKNLLGDSLFVKKQQNSYMRKKYLFMTPLVGNLLKPSYTHQGTAFEIETVKRTIQSILEDQADEDVLNRVVCELVKSLGAGCADLTLDDIQFYLGSYGMFSENILEKLDQLRELVGPWTHEWAESVLKSGTCETDEVQFVAFEEEQVKLTSMDHSGKVVGGKKRKIATMFDDLDL</sequence>
<gene>
    <name evidence="1" type="primary">DBP</name>
    <name type="synonym">6</name>
</gene>
<reference key="1">
    <citation type="journal article" date="1997" name="J. Virol.">
        <title>Primary structure of the alcelaphine herpesvirus 1 genome.</title>
        <authorList>
            <person name="Ensser A."/>
            <person name="Pflanz R."/>
            <person name="Fleckenstein B."/>
        </authorList>
    </citation>
    <scope>NUCLEOTIDE SEQUENCE [LARGE SCALE GENOMIC DNA]</scope>
</reference>
<dbReference type="EMBL" id="AF005370">
    <property type="protein sequence ID" value="AAC58057.1"/>
    <property type="molecule type" value="Genomic_DNA"/>
</dbReference>
<dbReference type="PIR" id="T03105">
    <property type="entry name" value="T03105"/>
</dbReference>
<dbReference type="RefSeq" id="NP_065509.1">
    <property type="nucleotide sequence ID" value="NC_002531.1"/>
</dbReference>
<dbReference type="SMR" id="O36360"/>
<dbReference type="KEGG" id="vg:911793"/>
<dbReference type="Proteomes" id="UP000000941">
    <property type="component" value="Segment"/>
</dbReference>
<dbReference type="GO" id="GO:0042025">
    <property type="term" value="C:host cell nucleus"/>
    <property type="evidence" value="ECO:0007669"/>
    <property type="project" value="UniProtKB-SubCell"/>
</dbReference>
<dbReference type="GO" id="GO:0003697">
    <property type="term" value="F:single-stranded DNA binding"/>
    <property type="evidence" value="ECO:0007669"/>
    <property type="project" value="InterPro"/>
</dbReference>
<dbReference type="GO" id="GO:0006260">
    <property type="term" value="P:DNA replication"/>
    <property type="evidence" value="ECO:0007669"/>
    <property type="project" value="UniProtKB-KW"/>
</dbReference>
<dbReference type="Gene3D" id="1.20.190.40">
    <property type="entry name" value="Viral ssDNA binding protein, head domain"/>
    <property type="match status" value="2"/>
</dbReference>
<dbReference type="HAMAP" id="MF_04007">
    <property type="entry name" value="HSV_DNBI"/>
    <property type="match status" value="1"/>
</dbReference>
<dbReference type="InterPro" id="IPR035989">
    <property type="entry name" value="DBP_sf"/>
</dbReference>
<dbReference type="InterPro" id="IPR043031">
    <property type="entry name" value="Viral_ssDBP_head"/>
</dbReference>
<dbReference type="InterPro" id="IPR000635">
    <property type="entry name" value="Viral_ssDNA-bd"/>
</dbReference>
<dbReference type="Pfam" id="PF00747">
    <property type="entry name" value="Viral_DNA_bp"/>
    <property type="match status" value="1"/>
</dbReference>
<dbReference type="SUPFAM" id="SSF118208">
    <property type="entry name" value="Viral ssDNA binding protein"/>
    <property type="match status" value="1"/>
</dbReference>